<accession>Q3YVN9</accession>
<keyword id="KW-0066">ATP synthesis</keyword>
<keyword id="KW-0997">Cell inner membrane</keyword>
<keyword id="KW-1003">Cell membrane</keyword>
<keyword id="KW-0139">CF(1)</keyword>
<keyword id="KW-0375">Hydrogen ion transport</keyword>
<keyword id="KW-0406">Ion transport</keyword>
<keyword id="KW-0472">Membrane</keyword>
<keyword id="KW-1185">Reference proteome</keyword>
<keyword id="KW-0813">Transport</keyword>
<sequence length="177" mass="19332">MSEFITVARPYAKAAFDFAVEHQSVERWQDMLAFAAEVTKNEQMAELLSGALAPETLAESFIAVCGEQLDENGQNLIRVMAENGRLNALPDVLEQFIHLRAVSEATAEVDVISAAALSEQQLAKISAAMEKRLSRKVKLNCKIDKSVMAGVIIRAGDMVIDGSVRGRLERLADVLQS</sequence>
<name>ATPD_SHISS</name>
<dbReference type="EMBL" id="CP000038">
    <property type="protein sequence ID" value="AAZ90423.1"/>
    <property type="molecule type" value="Genomic_DNA"/>
</dbReference>
<dbReference type="RefSeq" id="WP_001288587.1">
    <property type="nucleotide sequence ID" value="NC_007384.1"/>
</dbReference>
<dbReference type="SMR" id="Q3YVN9"/>
<dbReference type="GeneID" id="93778232"/>
<dbReference type="KEGG" id="ssn:SSON_3884"/>
<dbReference type="HOGENOM" id="CLU_085114_3_0_6"/>
<dbReference type="Proteomes" id="UP000002529">
    <property type="component" value="Chromosome"/>
</dbReference>
<dbReference type="GO" id="GO:0005886">
    <property type="term" value="C:plasma membrane"/>
    <property type="evidence" value="ECO:0007669"/>
    <property type="project" value="UniProtKB-SubCell"/>
</dbReference>
<dbReference type="GO" id="GO:0045259">
    <property type="term" value="C:proton-transporting ATP synthase complex"/>
    <property type="evidence" value="ECO:0007669"/>
    <property type="project" value="UniProtKB-KW"/>
</dbReference>
<dbReference type="GO" id="GO:0046933">
    <property type="term" value="F:proton-transporting ATP synthase activity, rotational mechanism"/>
    <property type="evidence" value="ECO:0007669"/>
    <property type="project" value="UniProtKB-UniRule"/>
</dbReference>
<dbReference type="FunFam" id="1.10.520.20:FF:000001">
    <property type="entry name" value="ATP synthase subunit delta"/>
    <property type="match status" value="1"/>
</dbReference>
<dbReference type="Gene3D" id="1.10.520.20">
    <property type="entry name" value="N-terminal domain of the delta subunit of the F1F0-ATP synthase"/>
    <property type="match status" value="1"/>
</dbReference>
<dbReference type="HAMAP" id="MF_01416">
    <property type="entry name" value="ATP_synth_delta_bact"/>
    <property type="match status" value="1"/>
</dbReference>
<dbReference type="InterPro" id="IPR026015">
    <property type="entry name" value="ATP_synth_OSCP/delta_N_sf"/>
</dbReference>
<dbReference type="InterPro" id="IPR020781">
    <property type="entry name" value="ATPase_OSCP/d_CS"/>
</dbReference>
<dbReference type="InterPro" id="IPR000711">
    <property type="entry name" value="ATPase_OSCP/dsu"/>
</dbReference>
<dbReference type="NCBIfam" id="TIGR01145">
    <property type="entry name" value="ATP_synt_delta"/>
    <property type="match status" value="1"/>
</dbReference>
<dbReference type="NCBIfam" id="NF004402">
    <property type="entry name" value="PRK05758.2-2"/>
    <property type="match status" value="1"/>
</dbReference>
<dbReference type="NCBIfam" id="NF004404">
    <property type="entry name" value="PRK05758.2-5"/>
    <property type="match status" value="1"/>
</dbReference>
<dbReference type="PANTHER" id="PTHR11910">
    <property type="entry name" value="ATP SYNTHASE DELTA CHAIN"/>
    <property type="match status" value="1"/>
</dbReference>
<dbReference type="Pfam" id="PF00213">
    <property type="entry name" value="OSCP"/>
    <property type="match status" value="1"/>
</dbReference>
<dbReference type="PRINTS" id="PR00125">
    <property type="entry name" value="ATPASEDELTA"/>
</dbReference>
<dbReference type="SUPFAM" id="SSF47928">
    <property type="entry name" value="N-terminal domain of the delta subunit of the F1F0-ATP synthase"/>
    <property type="match status" value="1"/>
</dbReference>
<dbReference type="PROSITE" id="PS00389">
    <property type="entry name" value="ATPASE_DELTA"/>
    <property type="match status" value="1"/>
</dbReference>
<comment type="function">
    <text evidence="1">F(1)F(0) ATP synthase produces ATP from ADP in the presence of a proton or sodium gradient. F-type ATPases consist of two structural domains, F(1) containing the extramembraneous catalytic core and F(0) containing the membrane proton channel, linked together by a central stalk and a peripheral stalk. During catalysis, ATP synthesis in the catalytic domain of F(1) is coupled via a rotary mechanism of the central stalk subunits to proton translocation.</text>
</comment>
<comment type="function">
    <text evidence="1">This protein is part of the stalk that links CF(0) to CF(1). It either transmits conformational changes from CF(0) to CF(1) or is implicated in proton conduction.</text>
</comment>
<comment type="subunit">
    <text evidence="1">F-type ATPases have 2 components, F(1) - the catalytic core - and F(0) - the membrane proton channel. F(1) has five subunits: alpha(3), beta(3), gamma(1), delta(1), epsilon(1). F(0) has three main subunits: a(1), b(2) and c(10-14). The alpha and beta chains form an alternating ring which encloses part of the gamma chain. F(1) is attached to F(0) by a central stalk formed by the gamma and epsilon chains, while a peripheral stalk is formed by the delta and b chains.</text>
</comment>
<comment type="subcellular location">
    <subcellularLocation>
        <location evidence="1">Cell inner membrane</location>
        <topology evidence="1">Peripheral membrane protein</topology>
    </subcellularLocation>
</comment>
<comment type="similarity">
    <text evidence="1">Belongs to the ATPase delta chain family.</text>
</comment>
<proteinExistence type="inferred from homology"/>
<evidence type="ECO:0000255" key="1">
    <source>
        <dbReference type="HAMAP-Rule" id="MF_01416"/>
    </source>
</evidence>
<feature type="chain" id="PRO_0000371143" description="ATP synthase subunit delta">
    <location>
        <begin position="1"/>
        <end position="177"/>
    </location>
</feature>
<reference key="1">
    <citation type="journal article" date="2005" name="Nucleic Acids Res.">
        <title>Genome dynamics and diversity of Shigella species, the etiologic agents of bacillary dysentery.</title>
        <authorList>
            <person name="Yang F."/>
            <person name="Yang J."/>
            <person name="Zhang X."/>
            <person name="Chen L."/>
            <person name="Jiang Y."/>
            <person name="Yan Y."/>
            <person name="Tang X."/>
            <person name="Wang J."/>
            <person name="Xiong Z."/>
            <person name="Dong J."/>
            <person name="Xue Y."/>
            <person name="Zhu Y."/>
            <person name="Xu X."/>
            <person name="Sun L."/>
            <person name="Chen S."/>
            <person name="Nie H."/>
            <person name="Peng J."/>
            <person name="Xu J."/>
            <person name="Wang Y."/>
            <person name="Yuan Z."/>
            <person name="Wen Y."/>
            <person name="Yao Z."/>
            <person name="Shen Y."/>
            <person name="Qiang B."/>
            <person name="Hou Y."/>
            <person name="Yu J."/>
            <person name="Jin Q."/>
        </authorList>
    </citation>
    <scope>NUCLEOTIDE SEQUENCE [LARGE SCALE GENOMIC DNA]</scope>
    <source>
        <strain>Ss046</strain>
    </source>
</reference>
<protein>
    <recommendedName>
        <fullName evidence="1">ATP synthase subunit delta</fullName>
    </recommendedName>
    <alternativeName>
        <fullName evidence="1">ATP synthase F(1) sector subunit delta</fullName>
    </alternativeName>
    <alternativeName>
        <fullName evidence="1">F-type ATPase subunit delta</fullName>
        <shortName evidence="1">F-ATPase subunit delta</shortName>
    </alternativeName>
</protein>
<gene>
    <name evidence="1" type="primary">atpH</name>
    <name type="ordered locus">SSON_3884</name>
</gene>
<organism>
    <name type="scientific">Shigella sonnei (strain Ss046)</name>
    <dbReference type="NCBI Taxonomy" id="300269"/>
    <lineage>
        <taxon>Bacteria</taxon>
        <taxon>Pseudomonadati</taxon>
        <taxon>Pseudomonadota</taxon>
        <taxon>Gammaproteobacteria</taxon>
        <taxon>Enterobacterales</taxon>
        <taxon>Enterobacteriaceae</taxon>
        <taxon>Shigella</taxon>
    </lineage>
</organism>